<comment type="function">
    <text evidence="1">Binds to sialic acid-containing receptors on the cell surface, bringing about the attachment of the virus particle to the cell. This attachment induces virion internalization either through clathrin-dependent endocytosis or through clathrin- and caveolin-independent pathway. Plays a major role in the determination of host range restriction and virulence. Class I viral fusion protein. Responsible for penetration of the virus into the cell cytoplasm by mediating the fusion of the membrane of the endocytosed virus particle with the endosomal membrane. Low pH in endosomes induces an irreversible conformational change in HA2, releasing the fusion hydrophobic peptide. Several trimers are required to form a competent fusion pore.</text>
</comment>
<comment type="subunit">
    <text evidence="1">Homotrimer of disulfide-linked HA1-HA2.</text>
</comment>
<comment type="subcellular location">
    <subcellularLocation>
        <location evidence="1">Virion membrane</location>
        <topology evidence="1">Single-pass type I membrane protein</topology>
    </subcellularLocation>
    <subcellularLocation>
        <location evidence="1">Host apical cell membrane</location>
        <topology evidence="1">Single-pass type I membrane protein</topology>
    </subcellularLocation>
    <text evidence="1">Targeted to the apical plasma membrane in epithelial polarized cells through a signal present in the transmembrane domain. Associated with glycosphingolipid- and cholesterol-enriched detergent-resistant lipid rafts.</text>
</comment>
<comment type="PTM">
    <text evidence="1">Palmitoylated.</text>
</comment>
<comment type="PTM">
    <text evidence="1">In natural infection, inactive HA is matured into HA1 and HA2 outside the cell by one or more trypsin-like, arginine-specific endoprotease secreted by the bronchial epithelial cells. One identified protease that may be involved in this process is secreted in lungs by club cells.</text>
</comment>
<comment type="miscellaneous">
    <text>Major glycoprotein, comprises over 80% of the envelope proteins present in virus particle.</text>
</comment>
<comment type="miscellaneous">
    <text>The extent of infection into host organism is determined by HA. Influenza viruses bud from the apical surface of polarized epithelial cells (e.g. bronchial epithelial cells) into lumen of lungs and are therefore usually pneumotropic. The reason is that HA is cleaved by tryptase clara which is restricted to lungs. However, HAs of H5 and H7 pantropic avian viruses subtypes can be cleaved by furin and subtilisin-type enzymes, allowing the virus to grow in other organs than lungs.</text>
</comment>
<comment type="miscellaneous">
    <text>The influenza A genome consist of 8 RNA segments. Genetic variation of hemagglutinin and/or neuraminidase genes results in the emergence of new influenza strains. The mechanism of variation can be the result of point mutations or the result of genetic reassortment between segments of two different strains.</text>
</comment>
<comment type="similarity">
    <text evidence="1">Belongs to the influenza viruses hemagglutinin family.</text>
</comment>
<evidence type="ECO:0000255" key="1">
    <source>
        <dbReference type="HAMAP-Rule" id="MF_04072"/>
    </source>
</evidence>
<dbReference type="EMBL" id="AY651345">
    <property type="protein sequence ID" value="AAT73285.1"/>
    <property type="molecule type" value="Genomic_RNA"/>
</dbReference>
<dbReference type="SMR" id="Q6DQ22"/>
<dbReference type="GlyCosmos" id="Q6DQ22">
    <property type="glycosylation" value="6 sites, No reported glycans"/>
</dbReference>
<dbReference type="GO" id="GO:0020002">
    <property type="term" value="C:host cell plasma membrane"/>
    <property type="evidence" value="ECO:0007669"/>
    <property type="project" value="UniProtKB-SubCell"/>
</dbReference>
<dbReference type="GO" id="GO:0016020">
    <property type="term" value="C:membrane"/>
    <property type="evidence" value="ECO:0007669"/>
    <property type="project" value="UniProtKB-KW"/>
</dbReference>
<dbReference type="GO" id="GO:0019031">
    <property type="term" value="C:viral envelope"/>
    <property type="evidence" value="ECO:0007669"/>
    <property type="project" value="UniProtKB-KW"/>
</dbReference>
<dbReference type="GO" id="GO:0055036">
    <property type="term" value="C:virion membrane"/>
    <property type="evidence" value="ECO:0007669"/>
    <property type="project" value="UniProtKB-SubCell"/>
</dbReference>
<dbReference type="GO" id="GO:0046789">
    <property type="term" value="F:host cell surface receptor binding"/>
    <property type="evidence" value="ECO:0007669"/>
    <property type="project" value="InterPro"/>
</dbReference>
<dbReference type="GO" id="GO:0075512">
    <property type="term" value="P:clathrin-dependent endocytosis of virus by host cell"/>
    <property type="evidence" value="ECO:0007669"/>
    <property type="project" value="UniProtKB-KW"/>
</dbReference>
<dbReference type="GO" id="GO:0039654">
    <property type="term" value="P:fusion of virus membrane with host endosome membrane"/>
    <property type="evidence" value="ECO:0007669"/>
    <property type="project" value="UniProtKB-KW"/>
</dbReference>
<dbReference type="GO" id="GO:0019064">
    <property type="term" value="P:fusion of virus membrane with host plasma membrane"/>
    <property type="evidence" value="ECO:0007669"/>
    <property type="project" value="InterPro"/>
</dbReference>
<dbReference type="GO" id="GO:0019062">
    <property type="term" value="P:virion attachment to host cell"/>
    <property type="evidence" value="ECO:0007669"/>
    <property type="project" value="UniProtKB-KW"/>
</dbReference>
<dbReference type="FunFam" id="3.90.209.20:FF:000001">
    <property type="entry name" value="Hemagglutinin"/>
    <property type="match status" value="1"/>
</dbReference>
<dbReference type="Gene3D" id="3.90.20.10">
    <property type="match status" value="1"/>
</dbReference>
<dbReference type="Gene3D" id="3.90.209.20">
    <property type="match status" value="1"/>
</dbReference>
<dbReference type="Gene3D" id="2.10.77.10">
    <property type="entry name" value="Hemagglutinin Chain A, Domain 2"/>
    <property type="match status" value="1"/>
</dbReference>
<dbReference type="HAMAP" id="MF_04072">
    <property type="entry name" value="INFV_HEMA"/>
    <property type="match status" value="1"/>
</dbReference>
<dbReference type="InterPro" id="IPR008980">
    <property type="entry name" value="Capsid_hemagglutn"/>
</dbReference>
<dbReference type="InterPro" id="IPR013828">
    <property type="entry name" value="Hemagglutn_HA1_a/b_dom_sf"/>
</dbReference>
<dbReference type="InterPro" id="IPR000149">
    <property type="entry name" value="Hemagglutn_influenz_A"/>
</dbReference>
<dbReference type="InterPro" id="IPR001364">
    <property type="entry name" value="Hemagglutn_influenz_A/B"/>
</dbReference>
<dbReference type="Pfam" id="PF00509">
    <property type="entry name" value="Hemagglutinin"/>
    <property type="match status" value="1"/>
</dbReference>
<dbReference type="PRINTS" id="PR00330">
    <property type="entry name" value="HEMAGGLUTN1"/>
</dbReference>
<dbReference type="PRINTS" id="PR00329">
    <property type="entry name" value="HEMAGGLUTN12"/>
</dbReference>
<dbReference type="SUPFAM" id="SSF58064">
    <property type="entry name" value="Influenza hemagglutinin (stalk)"/>
    <property type="match status" value="1"/>
</dbReference>
<dbReference type="SUPFAM" id="SSF49818">
    <property type="entry name" value="Viral protein domain"/>
    <property type="match status" value="1"/>
</dbReference>
<sequence length="555" mass="62827">KIVLLLAIVSLVKSDQICIGYHANNSTEQVDTIMEKNVTVTHAQDILEKTHNGKLCDLDGVKPLILRDCSVAGWLLGNPMCDEFINVPEWSYIVEKANPANDLCYPGDFNDYEELKHLLSRINHFEKIQIIPKSSWSNHEASSGVSSACPYNGKSSFFRNVVWLIKKDSAYPTIKRSYNNTNQEDLLILWGIHHPNDAAEQTKLYQNPTTYISVGTSTLNQRLVPKIATRSKVNGQSGRMEFFWTILKPNDAINFESNGNFIAPEYAYKIVKKGDSAIMKSELEYGNCNTKCQTPMGAINSSMPFHNIHPLTIGECPKYVKSNRLVLATGLRNTPQRERRRKKRGLFGAIAGFIEGGWQGMVDGWYGYHHSNEQGSGYAADKESTQKAIDGVTNKVNSIINKMNTQFEAVGREFNNLERRIENLNKKMEDGFLDVWTYNAELLVLMENERTLDFHDSNVKNLYDKVRLQLRDNAKELGNGCFEFYHKCDNECMESVKNGTYDYPQYSEEARLNREEISGVKLESMGTYQILSIYSTVASSLALAIMVAGLSLWMC</sequence>
<gene>
    <name evidence="1" type="primary">HA</name>
</gene>
<accession>Q6DQ22</accession>
<proteinExistence type="inferred from homology"/>
<name>HEMA_I02A1</name>
<organismHost>
    <name type="scientific">Aves</name>
    <dbReference type="NCBI Taxonomy" id="8782"/>
</organismHost>
<organismHost>
    <name type="scientific">Felis catus</name>
    <name type="common">Cat</name>
    <name type="synonym">Felis silvestris catus</name>
    <dbReference type="NCBI Taxonomy" id="9685"/>
</organismHost>
<organismHost>
    <name type="scientific">Homo sapiens</name>
    <name type="common">Human</name>
    <dbReference type="NCBI Taxonomy" id="9606"/>
</organismHost>
<organismHost>
    <name type="scientific">Panthera pardus</name>
    <name type="common">Leopard</name>
    <name type="synonym">Felis pardus</name>
    <dbReference type="NCBI Taxonomy" id="9691"/>
</organismHost>
<organismHost>
    <name type="scientific">Panthera tigris</name>
    <name type="common">Tiger</name>
    <dbReference type="NCBI Taxonomy" id="9694"/>
</organismHost>
<organismHost>
    <name type="scientific">Sus scrofa</name>
    <name type="common">Pig</name>
    <dbReference type="NCBI Taxonomy" id="9823"/>
</organismHost>
<keyword id="KW-1167">Clathrin- and caveolin-independent endocytosis of virus by host</keyword>
<keyword id="KW-1165">Clathrin-mediated endocytosis of virus by host</keyword>
<keyword id="KW-1015">Disulfide bond</keyword>
<keyword id="KW-1170">Fusion of virus membrane with host endosomal membrane</keyword>
<keyword id="KW-1168">Fusion of virus membrane with host membrane</keyword>
<keyword id="KW-0325">Glycoprotein</keyword>
<keyword id="KW-0348">Hemagglutinin</keyword>
<keyword id="KW-1032">Host cell membrane</keyword>
<keyword id="KW-1043">Host membrane</keyword>
<keyword id="KW-0945">Host-virus interaction</keyword>
<keyword id="KW-0449">Lipoprotein</keyword>
<keyword id="KW-0472">Membrane</keyword>
<keyword id="KW-0564">Palmitate</keyword>
<keyword id="KW-0732">Signal</keyword>
<keyword id="KW-0812">Transmembrane</keyword>
<keyword id="KW-1133">Transmembrane helix</keyword>
<keyword id="KW-1161">Viral attachment to host cell</keyword>
<keyword id="KW-0261">Viral envelope protein</keyword>
<keyword id="KW-1162">Viral penetration into host cytoplasm</keyword>
<keyword id="KW-0946">Virion</keyword>
<keyword id="KW-1164">Virus endocytosis by host</keyword>
<keyword id="KW-1160">Virus entry into host cell</keyword>
<reference key="1">
    <citation type="journal article" date="2004" name="Nature">
        <title>Genesis of a highly pathogenic and potentially pandemic H5N1 influenza virus in eastern Asia.</title>
        <authorList>
            <person name="Li K.S."/>
            <person name="Guan Y."/>
            <person name="Wang J."/>
            <person name="Smith G.J.D."/>
            <person name="Xu K.M."/>
            <person name="Duan L."/>
            <person name="Rahardjo A.P."/>
            <person name="Puthavathana P."/>
            <person name="Buranathai C."/>
            <person name="Nguyen T.D."/>
            <person name="Estoepangestie A.T.S."/>
            <person name="Chaisingh A."/>
            <person name="Auewarakul P."/>
            <person name="Long H.T."/>
            <person name="Hanh N.T.H."/>
            <person name="Webby R.J."/>
            <person name="Poon L.L.M."/>
            <person name="Chen H."/>
            <person name="Shortridge K.F."/>
            <person name="Yuen K.Y."/>
            <person name="Webster R.G."/>
            <person name="Peiris J.S.M."/>
        </authorList>
    </citation>
    <scope>NUCLEOTIDE SEQUENCE [GENOMIC RNA]</scope>
</reference>
<protein>
    <recommendedName>
        <fullName evidence="1">Hemagglutinin</fullName>
    </recommendedName>
    <component>
        <recommendedName>
            <fullName evidence="1">Hemagglutinin HA1 chain</fullName>
        </recommendedName>
    </component>
    <component>
        <recommendedName>
            <fullName evidence="1">Hemagglutinin HA2 chain</fullName>
        </recommendedName>
    </component>
</protein>
<organism>
    <name type="scientific">Influenza A virus (strain A/Guinea fowl/Hong Kong/38/2002 H5N1 genotype X0)</name>
    <dbReference type="NCBI Taxonomy" id="284208"/>
    <lineage>
        <taxon>Viruses</taxon>
        <taxon>Riboviria</taxon>
        <taxon>Orthornavirae</taxon>
        <taxon>Negarnaviricota</taxon>
        <taxon>Polyploviricotina</taxon>
        <taxon>Insthoviricetes</taxon>
        <taxon>Articulavirales</taxon>
        <taxon>Orthomyxoviridae</taxon>
        <taxon>Alphainfluenzavirus</taxon>
        <taxon>Alphainfluenzavirus influenzae</taxon>
        <taxon>Influenza A virus</taxon>
    </lineage>
</organism>
<feature type="signal peptide" evidence="1">
    <location>
        <begin position="1"/>
        <end position="14"/>
    </location>
</feature>
<feature type="chain" id="PRO_0000440808" description="Hemagglutinin" evidence="1">
    <location>
        <begin position="15"/>
        <end position="555"/>
    </location>
</feature>
<feature type="chain" id="PRO_0000440809" description="Hemagglutinin HA1 chain" evidence="1">
    <location>
        <begin position="15"/>
        <end position="344"/>
    </location>
</feature>
<feature type="chain" id="PRO_0000440810" description="Hemagglutinin HA2 chain" evidence="1">
    <location>
        <begin position="345"/>
        <end position="555"/>
    </location>
</feature>
<feature type="topological domain" description="Extracellular" evidence="1">
    <location>
        <begin position="15"/>
        <end position="529"/>
    </location>
</feature>
<feature type="transmembrane region" description="Helical" evidence="1">
    <location>
        <begin position="530"/>
        <end position="550"/>
    </location>
</feature>
<feature type="topological domain" description="Cytoplasmic" evidence="1">
    <location>
        <begin position="551"/>
        <end position="555"/>
    </location>
</feature>
<feature type="site" description="Cleavage; by host" evidence="1">
    <location>
        <begin position="344"/>
        <end position="345"/>
    </location>
</feature>
<feature type="lipid moiety-binding region" description="S-palmitoyl cysteine; by host" evidence="1">
    <location>
        <position position="555"/>
    </location>
</feature>
<feature type="glycosylation site" description="N-linked (GlcNAc...) asparagine; by host" evidence="1">
    <location>
        <position position="24"/>
    </location>
</feature>
<feature type="glycosylation site" description="N-linked (GlcNAc...) asparagine; by host" evidence="1">
    <location>
        <position position="25"/>
    </location>
</feature>
<feature type="glycosylation site" description="N-linked (GlcNAc...) asparagine; by host" evidence="1">
    <location>
        <position position="37"/>
    </location>
</feature>
<feature type="glycosylation site" description="N-linked (GlcNAc...) asparagine; by host" evidence="1">
    <location>
        <position position="179"/>
    </location>
</feature>
<feature type="glycosylation site" description="N-linked (GlcNAc...) asparagine; by host" evidence="1">
    <location>
        <position position="300"/>
    </location>
</feature>
<feature type="glycosylation site" description="N-linked (GlcNAc...) asparagine; by host" evidence="1">
    <location>
        <position position="498"/>
    </location>
</feature>
<feature type="disulfide bond" description="Interchain (between HA1 and HA2 chains)" evidence="1">
    <location>
        <begin position="18"/>
        <end position="481"/>
    </location>
</feature>
<feature type="disulfide bond" evidence="1">
    <location>
        <begin position="56"/>
        <end position="288"/>
    </location>
</feature>
<feature type="disulfide bond" evidence="1">
    <location>
        <begin position="69"/>
        <end position="81"/>
    </location>
</feature>
<feature type="disulfide bond" evidence="1">
    <location>
        <begin position="104"/>
        <end position="149"/>
    </location>
</feature>
<feature type="disulfide bond" evidence="1">
    <location>
        <begin position="292"/>
        <end position="316"/>
    </location>
</feature>
<feature type="disulfide bond" evidence="1">
    <location>
        <begin position="488"/>
        <end position="492"/>
    </location>
</feature>
<feature type="non-terminal residue">
    <location>
        <position position="1"/>
    </location>
</feature>
<feature type="non-terminal residue">
    <location>
        <position position="555"/>
    </location>
</feature>